<accession>Q3KQ35</accession>
<accession>O42600</accession>
<accession>Q90ZI0</accession>
<feature type="chain" id="PRO_0000376050" description="Transcription factor Sox-17-alpha-A">
    <location>
        <begin position="1"/>
        <end position="380"/>
    </location>
</feature>
<feature type="domain" description="Sox C-terminal" evidence="4">
    <location>
        <begin position="264"/>
        <end position="379"/>
    </location>
</feature>
<feature type="DNA-binding region" description="HMG box" evidence="3">
    <location>
        <begin position="61"/>
        <end position="129"/>
    </location>
</feature>
<feature type="region of interest" description="Disordered" evidence="5">
    <location>
        <begin position="1"/>
        <end position="20"/>
    </location>
</feature>
<feature type="region of interest" description="Disordered" evidence="5">
    <location>
        <begin position="40"/>
        <end position="59"/>
    </location>
</feature>
<feature type="region of interest" description="Disordered" evidence="5">
    <location>
        <begin position="292"/>
        <end position="312"/>
    </location>
</feature>
<feature type="region of interest" description="Required for transcriptional activity and interaction with ctnnb1" evidence="15">
    <location>
        <begin position="329"/>
        <end position="334"/>
    </location>
</feature>
<feature type="short sequence motif" description="9aaTAD" evidence="2">
    <location>
        <begin position="328"/>
        <end position="336"/>
    </location>
</feature>
<feature type="mutagenesis site" description="Significantly reduces transcriptional activation activity. Impairs interaction with ctnnb1." evidence="15">
    <location>
        <begin position="329"/>
        <end position="333"/>
    </location>
</feature>
<feature type="mutagenesis site" description="Significantly reduces transcriptional activation activity. Impairs interaction with ctnnb1." evidence="15">
    <original>EQY</original>
    <variation>GGG</variation>
    <location>
        <begin position="331"/>
        <end position="333"/>
    </location>
</feature>
<feature type="sequence conflict" description="In Ref. 1; CAA04957." evidence="21" ref="1">
    <original>P</original>
    <variation>S</variation>
    <location>
        <position position="181"/>
    </location>
</feature>
<organism>
    <name type="scientific">Xenopus laevis</name>
    <name type="common">African clawed frog</name>
    <dbReference type="NCBI Taxonomy" id="8355"/>
    <lineage>
        <taxon>Eukaryota</taxon>
        <taxon>Metazoa</taxon>
        <taxon>Chordata</taxon>
        <taxon>Craniata</taxon>
        <taxon>Vertebrata</taxon>
        <taxon>Euteleostomi</taxon>
        <taxon>Amphibia</taxon>
        <taxon>Batrachia</taxon>
        <taxon>Anura</taxon>
        <taxon>Pipoidea</taxon>
        <taxon>Pipidae</taxon>
        <taxon>Xenopodinae</taxon>
        <taxon>Xenopus</taxon>
        <taxon>Xenopus</taxon>
    </lineage>
</organism>
<evidence type="ECO:0000250" key="1"/>
<evidence type="ECO:0000250" key="2">
    <source>
        <dbReference type="UniProtKB" id="Q9H6I2"/>
    </source>
</evidence>
<evidence type="ECO:0000255" key="3">
    <source>
        <dbReference type="PROSITE-ProRule" id="PRU00267"/>
    </source>
</evidence>
<evidence type="ECO:0000255" key="4">
    <source>
        <dbReference type="PROSITE-ProRule" id="PRU00849"/>
    </source>
</evidence>
<evidence type="ECO:0000256" key="5">
    <source>
        <dbReference type="SAM" id="MobiDB-lite"/>
    </source>
</evidence>
<evidence type="ECO:0000269" key="6">
    <source>
    </source>
</evidence>
<evidence type="ECO:0000269" key="7">
    <source>
    </source>
</evidence>
<evidence type="ECO:0000269" key="8">
    <source>
    </source>
</evidence>
<evidence type="ECO:0000269" key="9">
    <source>
    </source>
</evidence>
<evidence type="ECO:0000269" key="10">
    <source>
    </source>
</evidence>
<evidence type="ECO:0000269" key="11">
    <source>
    </source>
</evidence>
<evidence type="ECO:0000269" key="12">
    <source>
    </source>
</evidence>
<evidence type="ECO:0000269" key="13">
    <source>
    </source>
</evidence>
<evidence type="ECO:0000269" key="14">
    <source>
    </source>
</evidence>
<evidence type="ECO:0000269" key="15">
    <source>
    </source>
</evidence>
<evidence type="ECO:0000269" key="16">
    <source>
    </source>
</evidence>
<evidence type="ECO:0000269" key="17">
    <source>
    </source>
</evidence>
<evidence type="ECO:0000269" key="18">
    <source>
    </source>
</evidence>
<evidence type="ECO:0000269" key="19">
    <source>
    </source>
</evidence>
<evidence type="ECO:0000303" key="20">
    <source>
    </source>
</evidence>
<evidence type="ECO:0000305" key="21"/>
<evidence type="ECO:0000312" key="22">
    <source>
        <dbReference type="EMBL" id="AAI06404.1"/>
    </source>
</evidence>
<evidence type="ECO:0000312" key="23">
    <source>
        <dbReference type="EMBL" id="BAB60827.1"/>
    </source>
</evidence>
<evidence type="ECO:0000312" key="24">
    <source>
        <dbReference type="EMBL" id="CAA04957.1"/>
    </source>
</evidence>
<keyword id="KW-0010">Activator</keyword>
<keyword id="KW-0217">Developmental protein</keyword>
<keyword id="KW-0238">DNA-binding</keyword>
<keyword id="KW-0306">Gastrulation</keyword>
<keyword id="KW-0539">Nucleus</keyword>
<keyword id="KW-1185">Reference proteome</keyword>
<keyword id="KW-0804">Transcription</keyword>
<keyword id="KW-0805">Transcription regulation</keyword>
<keyword id="KW-0879">Wnt signaling pathway</keyword>
<proteinExistence type="evidence at protein level"/>
<gene>
    <name type="primary">sox17a-a</name>
    <name type="synonym">sox17a</name>
    <name evidence="20" type="synonym">sox17a1</name>
</gene>
<reference evidence="21 24" key="1">
    <citation type="journal article" date="1997" name="Cell">
        <title>Xsox17alpha and -beta mediate endoderm formation in Xenopus.</title>
        <authorList>
            <person name="Hudson C."/>
            <person name="Clements D."/>
            <person name="Friday R.V."/>
            <person name="Stott D."/>
            <person name="Woodland H.R."/>
        </authorList>
    </citation>
    <scope>NUCLEOTIDE SEQUENCE [MRNA]</scope>
    <scope>FUNCTION</scope>
    <scope>SUBCELLULAR LOCATION</scope>
    <scope>TISSUE SPECIFICITY</scope>
    <scope>DEVELOPMENTAL STAGE</scope>
    <scope>INDUCTION</scope>
    <source>
        <tissue evidence="19">Vegetal pole</tissue>
    </source>
</reference>
<reference evidence="22" key="2">
    <citation type="submission" date="2005-10" db="EMBL/GenBank/DDBJ databases">
        <authorList>
            <consortium name="NIH - Xenopus Gene Collection (XGC) project"/>
        </authorList>
    </citation>
    <scope>NUCLEOTIDE SEQUENCE [LARGE SCALE MRNA]</scope>
    <source>
        <tissue evidence="22">Embryo</tissue>
    </source>
</reference>
<reference evidence="21 23" key="3">
    <citation type="journal article" date="2002" name="Gene">
        <title>Expression and characterization of Xenopus laevis SRY-related cDNAs, xSox17alpha1, xSox17alpha2, xSox18alpha and xSox18beta.</title>
        <authorList>
            <person name="Hasegawa M."/>
            <person name="Hiraoka Y."/>
            <person name="Hagiuda J."/>
            <person name="Ogawa M."/>
            <person name="Aiso S."/>
        </authorList>
    </citation>
    <scope>NUCLEOTIDE SEQUENCE [MRNA] OF 27-380</scope>
    <scope>TISSUE SPECIFICITY</scope>
</reference>
<reference evidence="21" key="4">
    <citation type="journal article" date="1999" name="Mol. Cell">
        <title>Regulation of Wnt signaling by Sox proteins: XSox17 alpha/beta and XSox3 physically interact with beta-catenin.</title>
        <authorList>
            <person name="Zorn A.M."/>
            <person name="Barish G.D."/>
            <person name="Williams B.O."/>
            <person name="Lavender P."/>
            <person name="Klymkowsky M.W."/>
            <person name="Varmus H.E."/>
        </authorList>
    </citation>
    <scope>FUNCTION</scope>
    <scope>INTERACTION WITH CTNNB1</scope>
</reference>
<reference evidence="21" key="5">
    <citation type="journal article" date="2000" name="Mech. Dev.">
        <title>Changes in embryonic cell fate produced by expression of an endodermal transcription factor, Xsox17.</title>
        <authorList>
            <person name="Clements D."/>
            <person name="Woodland H.R."/>
        </authorList>
    </citation>
    <scope>FUNCTION</scope>
</reference>
<reference evidence="21" key="6">
    <citation type="journal article" date="2001" name="Development">
        <title>Maternal VegT is the initiator of a molecular network specifying endoderm in Xenopus laevis.</title>
        <authorList>
            <person name="Xanthos J.B."/>
            <person name="Kofron M."/>
            <person name="Wylie C."/>
            <person name="Heasman J."/>
        </authorList>
    </citation>
    <scope>FUNCTION</scope>
    <scope>INDUCTION</scope>
</reference>
<reference evidence="21" key="7">
    <citation type="journal article" date="2001" name="Dev. Biol.">
        <title>VegT activation of Sox17 at the midblastula transition alters the response to nodal signals in the vegetal endoderm domain.</title>
        <authorList>
            <person name="Engleka M.J."/>
            <person name="Craig E.J."/>
            <person name="Kessler D.S."/>
        </authorList>
    </citation>
    <scope>FUNCTION</scope>
    <scope>INDUCTION</scope>
</reference>
<reference evidence="21" key="8">
    <citation type="journal article" date="2001" name="Mech. Dev.">
        <title>Gene expression in the embryonic Xenopus liver.</title>
        <authorList>
            <person name="Zorn A.M."/>
            <person name="Mason J."/>
        </authorList>
    </citation>
    <scope>TISSUE SPECIFICITY</scope>
</reference>
<reference evidence="21" key="9">
    <citation type="journal article" date="2003" name="Dev. Biol.">
        <title>VegT induces endoderm by a self-limiting mechanism and by changing the competence of cells to respond to TGF-beta signals.</title>
        <authorList>
            <person name="Clements D."/>
            <person name="Woodland H.R."/>
        </authorList>
    </citation>
    <scope>FUNCTION</scope>
    <scope>INDUCTION</scope>
</reference>
<reference evidence="21" key="10">
    <citation type="journal article" date="2003" name="Mech. Dev.">
        <title>Redundant early and overlapping larval roles of Xsox17 subgroup genes in Xenopus endoderm development.</title>
        <authorList>
            <person name="Clements D."/>
            <person name="Cameleyre I."/>
            <person name="Woodland H.R."/>
        </authorList>
    </citation>
    <scope>FUNCTION</scope>
    <scope>TISSUE SPECIFICITY</scope>
</reference>
<reference evidence="21" key="11">
    <citation type="journal article" date="2004" name="Development">
        <title>Sox17 and beta-catenin cooperate to regulate the transcription of endodermal genes.</title>
        <authorList>
            <person name="Sinner D."/>
            <person name="Rankin S."/>
            <person name="Lee M."/>
            <person name="Zorn A.M."/>
        </authorList>
    </citation>
    <scope>FUNCTION</scope>
    <scope>INTERACTION WITH CTNNB1</scope>
    <scope>MUTAGENESIS OF 329-GLU--TYR-333 AND 331-GLU--TYR-333</scope>
</reference>
<reference evidence="21" key="12">
    <citation type="journal article" date="2004" name="Differentiation">
        <title>Early endodermal expression of the Xenopus Endodermin gene is driven by regulatory sequences containing essential Sox protein-binding elements.</title>
        <authorList>
            <person name="Ahmed N."/>
            <person name="Howard L."/>
            <person name="Woodland H.R."/>
        </authorList>
    </citation>
    <scope>FUNCTION</scope>
</reference>
<reference evidence="21" key="13">
    <citation type="journal article" date="2006" name="Development">
        <title>Global analysis of the transcriptional network controlling Xenopus endoderm formation.</title>
        <authorList>
            <person name="Sinner D."/>
            <person name="Kirilenko P."/>
            <person name="Rankin S."/>
            <person name="Wei E."/>
            <person name="Howard L."/>
            <person name="Kofron M."/>
            <person name="Heasman J."/>
            <person name="Woodland H.R."/>
            <person name="Zorn A.M."/>
        </authorList>
    </citation>
    <scope>FUNCTION</scope>
    <scope>TISSUE SPECIFICITY</scope>
    <scope>INDUCTION</scope>
</reference>
<reference evidence="21" key="14">
    <citation type="journal article" date="2007" name="Dev. Biol.">
        <title>Regulation of the Xenopus Xsox17alpha(1) promoter by co-operating VegT and Sox17 sites.</title>
        <authorList>
            <person name="Howard L."/>
            <person name="Rex M."/>
            <person name="Clements D."/>
            <person name="Woodland H.R."/>
        </authorList>
    </citation>
    <scope>TISSUE SPECIFICITY</scope>
    <scope>INDUCTION</scope>
</reference>
<reference evidence="21" key="15">
    <citation type="journal article" date="2008" name="Cytotechnology">
        <title>Cephalic hedgehog expression is regulated directly by Sox17 in endoderm development of Xenopus laevis.</title>
        <authorList>
            <person name="Yagi Y."/>
            <person name="Ito Y."/>
            <person name="Kuhara S."/>
            <person name="Tashiro K."/>
        </authorList>
    </citation>
    <scope>FUNCTION</scope>
    <scope>TISSUE SPECIFICITY</scope>
</reference>
<protein>
    <recommendedName>
        <fullName>Transcription factor Sox-17-alpha-A</fullName>
        <shortName evidence="22">Xsox17alpha</shortName>
        <shortName evidence="23">xSox17alpha1</shortName>
    </recommendedName>
</protein>
<name>S17AA_XENLA</name>
<comment type="function">
    <text evidence="1 6 7 8 10 12 13 14 15 16 18 19">Transcriptional activator. Binds to the DNA sequence 5'-AACAAT-3' (By similarity). All of the sox17 proteins are required for embryonic endoderm development and gastrulation movements, and show some redundancy in function. In addition, the sox17 proteins have distinct but overlapping roles in later gut development. Acts downstream of vegt-signaling in endoderm differentiation to induce a range of endodermal genes both directly (including endodermin and dhh/chh) and indirectly. Also represses wnt-responsive genes to inhibit wnt/beta-catenin signaling.</text>
</comment>
<comment type="subunit">
    <text evidence="6 15">Interacts (via C-terminus) with ctnnb1/beta-catenin (via Armadillo repeats); this interaction is required for inhibition of wnt-signaling.</text>
</comment>
<comment type="subcellular location">
    <subcellularLocation>
        <location evidence="3 19">Nucleus</location>
    </subcellularLocation>
</comment>
<comment type="tissue specificity">
    <text evidence="9 11 12 16 17 18 19">In early gastrulae, expressed in the vegetal but not animal hemisphere. The vegetal region is fated to become endoderm, and endodermal expression continues throughout gastrulation and neurulation. At tailbud stages, expression is down-regulated and becomes restricted to the most posterior endoderm and the future liver/gall bladder region. By 3-7 days, endodermal expression is restricted to the gall bladder bud. Also expressed in the embryonic gut, with strong expression in the posterior gut during tailbud stages, but by stage 40, expression rises again in the anterior gut. Expressed at a low level in the adult kidney and spleen.</text>
</comment>
<comment type="developmental stage">
    <text evidence="19">Expressed zygotically from late blastula stage. Expressed at all subsequent stages from 10 (early gastrula) to 35 (early tadpole).</text>
</comment>
<comment type="induction">
    <text evidence="8 10 13 16 17 19">Involved in multiple regulatory feedback loops with other endodermal factors, including the nodal-related factors/Xnrs. Autoinduces. Induced by activin. Induced directly by vegt; originally this is in a cell-autonomous fashion but subsequently cell contact is required for expression to be maintained.</text>
</comment>
<comment type="domain">
    <text evidence="2">The 9aaTAD motif is a transactivation domain present in a large number of yeast and animal transcription factors.</text>
</comment>
<dbReference type="EMBL" id="AJ001730">
    <property type="protein sequence ID" value="CAA04957.1"/>
    <property type="molecule type" value="mRNA"/>
</dbReference>
<dbReference type="EMBL" id="BC106403">
    <property type="protein sequence ID" value="AAI06404.1"/>
    <property type="molecule type" value="mRNA"/>
</dbReference>
<dbReference type="EMBL" id="AB052690">
    <property type="protein sequence ID" value="BAB60827.1"/>
    <property type="molecule type" value="mRNA"/>
</dbReference>
<dbReference type="SMR" id="Q3KQ35"/>
<dbReference type="DNASU" id="397966"/>
<dbReference type="GeneID" id="397966"/>
<dbReference type="KEGG" id="xla:397966"/>
<dbReference type="AGR" id="Xenbase:XB-GENE-865067"/>
<dbReference type="CTD" id="397966"/>
<dbReference type="Xenbase" id="XB-GENE-865067">
    <property type="gene designation" value="sox17a.L"/>
</dbReference>
<dbReference type="OrthoDB" id="6247875at2759"/>
<dbReference type="Proteomes" id="UP000186698">
    <property type="component" value="Chromosome 6L"/>
</dbReference>
<dbReference type="Bgee" id="397966">
    <property type="expression patterns" value="Expressed in gastrula and 15 other cell types or tissues"/>
</dbReference>
<dbReference type="GO" id="GO:0005634">
    <property type="term" value="C:nucleus"/>
    <property type="evidence" value="ECO:0000314"/>
    <property type="project" value="UniProtKB"/>
</dbReference>
<dbReference type="GO" id="GO:0008013">
    <property type="term" value="F:beta-catenin binding"/>
    <property type="evidence" value="ECO:0000314"/>
    <property type="project" value="UniProtKB"/>
</dbReference>
<dbReference type="GO" id="GO:0001228">
    <property type="term" value="F:DNA-binding transcription activator activity, RNA polymerase II-specific"/>
    <property type="evidence" value="ECO:0000318"/>
    <property type="project" value="GO_Central"/>
</dbReference>
<dbReference type="GO" id="GO:0000978">
    <property type="term" value="F:RNA polymerase II cis-regulatory region sequence-specific DNA binding"/>
    <property type="evidence" value="ECO:0000318"/>
    <property type="project" value="GO_Central"/>
</dbReference>
<dbReference type="GO" id="GO:0043565">
    <property type="term" value="F:sequence-specific DNA binding"/>
    <property type="evidence" value="ECO:0000250"/>
    <property type="project" value="UniProtKB"/>
</dbReference>
<dbReference type="GO" id="GO:0001525">
    <property type="term" value="P:angiogenesis"/>
    <property type="evidence" value="ECO:0000318"/>
    <property type="project" value="GO_Central"/>
</dbReference>
<dbReference type="GO" id="GO:0042074">
    <property type="term" value="P:cell migration involved in gastrulation"/>
    <property type="evidence" value="ECO:0000315"/>
    <property type="project" value="UniProtKB"/>
</dbReference>
<dbReference type="GO" id="GO:0007492">
    <property type="term" value="P:endoderm development"/>
    <property type="evidence" value="ECO:0000315"/>
    <property type="project" value="UniProtKB"/>
</dbReference>
<dbReference type="GO" id="GO:0001706">
    <property type="term" value="P:endoderm formation"/>
    <property type="evidence" value="ECO:0000318"/>
    <property type="project" value="GO_Central"/>
</dbReference>
<dbReference type="GO" id="GO:0007440">
    <property type="term" value="P:foregut morphogenesis"/>
    <property type="evidence" value="ECO:0000315"/>
    <property type="project" value="UniProtKB"/>
</dbReference>
<dbReference type="GO" id="GO:0007507">
    <property type="term" value="P:heart development"/>
    <property type="evidence" value="ECO:0000318"/>
    <property type="project" value="GO_Central"/>
</dbReference>
<dbReference type="GO" id="GO:0007442">
    <property type="term" value="P:hindgut morphogenesis"/>
    <property type="evidence" value="ECO:0000315"/>
    <property type="project" value="UniProtKB"/>
</dbReference>
<dbReference type="GO" id="GO:0007494">
    <property type="term" value="P:midgut development"/>
    <property type="evidence" value="ECO:0000315"/>
    <property type="project" value="UniProtKB"/>
</dbReference>
<dbReference type="GO" id="GO:0090090">
    <property type="term" value="P:negative regulation of canonical Wnt signaling pathway"/>
    <property type="evidence" value="ECO:0000314"/>
    <property type="project" value="UniProtKB"/>
</dbReference>
<dbReference type="GO" id="GO:0008285">
    <property type="term" value="P:negative regulation of cell population proliferation"/>
    <property type="evidence" value="ECO:0000314"/>
    <property type="project" value="UniProtKB"/>
</dbReference>
<dbReference type="GO" id="GO:0045893">
    <property type="term" value="P:positive regulation of DNA-templated transcription"/>
    <property type="evidence" value="ECO:0000315"/>
    <property type="project" value="UniProtKB"/>
</dbReference>
<dbReference type="GO" id="GO:0045944">
    <property type="term" value="P:positive regulation of transcription by RNA polymerase II"/>
    <property type="evidence" value="ECO:0000315"/>
    <property type="project" value="UniProtKB"/>
</dbReference>
<dbReference type="GO" id="GO:0001570">
    <property type="term" value="P:vasculogenesis"/>
    <property type="evidence" value="ECO:0000318"/>
    <property type="project" value="GO_Central"/>
</dbReference>
<dbReference type="GO" id="GO:0016055">
    <property type="term" value="P:Wnt signaling pathway"/>
    <property type="evidence" value="ECO:0007669"/>
    <property type="project" value="UniProtKB-KW"/>
</dbReference>
<dbReference type="CDD" id="cd22047">
    <property type="entry name" value="HMG-box_SoxF_SOX17"/>
    <property type="match status" value="1"/>
</dbReference>
<dbReference type="FunFam" id="1.10.30.10:FF:000008">
    <property type="entry name" value="transcription factor SOX-7"/>
    <property type="match status" value="1"/>
</dbReference>
<dbReference type="Gene3D" id="1.10.30.10">
    <property type="entry name" value="High mobility group box domain"/>
    <property type="match status" value="1"/>
</dbReference>
<dbReference type="InterPro" id="IPR009071">
    <property type="entry name" value="HMG_box_dom"/>
</dbReference>
<dbReference type="InterPro" id="IPR036910">
    <property type="entry name" value="HMG_box_dom_sf"/>
</dbReference>
<dbReference type="InterPro" id="IPR033392">
    <property type="entry name" value="Sox7/17/18_central"/>
</dbReference>
<dbReference type="InterPro" id="IPR021934">
    <property type="entry name" value="Sox_C"/>
</dbReference>
<dbReference type="InterPro" id="IPR050140">
    <property type="entry name" value="SRY-related_HMG-box_TF-like"/>
</dbReference>
<dbReference type="PANTHER" id="PTHR10270">
    <property type="entry name" value="SOX TRANSCRIPTION FACTOR"/>
    <property type="match status" value="1"/>
</dbReference>
<dbReference type="PANTHER" id="PTHR10270:SF216">
    <property type="entry name" value="TRANSCRIPTION FACTOR SOX-17"/>
    <property type="match status" value="1"/>
</dbReference>
<dbReference type="Pfam" id="PF00505">
    <property type="entry name" value="HMG_box"/>
    <property type="match status" value="1"/>
</dbReference>
<dbReference type="Pfam" id="PF12067">
    <property type="entry name" value="Sox17_18_mid"/>
    <property type="match status" value="1"/>
</dbReference>
<dbReference type="SMART" id="SM00398">
    <property type="entry name" value="HMG"/>
    <property type="match status" value="1"/>
</dbReference>
<dbReference type="SUPFAM" id="SSF47095">
    <property type="entry name" value="HMG-box"/>
    <property type="match status" value="1"/>
</dbReference>
<dbReference type="PROSITE" id="PS50118">
    <property type="entry name" value="HMG_BOX_2"/>
    <property type="match status" value="1"/>
</dbReference>
<dbReference type="PROSITE" id="PS51516">
    <property type="entry name" value="SOX_C"/>
    <property type="match status" value="1"/>
</dbReference>
<sequence length="380" mass="42656">MSSPDGGYASDDQNQGKCSVPIMMTGLGQCQWAEPMTSLGEGKLKSDAGSANSRSKAEARIRRPMNAFMVWAKDERKRLAQQNPDLHNAELSKMLGKSWKSLTLAEKRPFVEEAERLRVQHMQDHPNYKYRPRRRKQVKRMKRAENGFMHMAEAQESAVLGADGRMCLENFSLGYHEQTYPHGQVPQSSHYREPQAVAPHYDGYSLPTPESSPLDLAEADPVFFTSPAQDECQMMPYSYNGSYPHQQNSMLVRQMPQTEQMGQVSPVQGMMACQSSPHMYYGQMYLPGSARHHQLHQAGQPSPPPEAQQMGRADHIQPADMLAEVDRTEFEQYLSYVAKSDLGMHYHAQESVVPTADNGPISSVLSDASTAVYYCNYPSA</sequence>